<accession>Q2K6G8</accession>
<organism>
    <name type="scientific">Rhizobium etli (strain ATCC 51251 / DSM 11541 / JCM 21823 / NBRC 15573 / CFN 42)</name>
    <dbReference type="NCBI Taxonomy" id="347834"/>
    <lineage>
        <taxon>Bacteria</taxon>
        <taxon>Pseudomonadati</taxon>
        <taxon>Pseudomonadota</taxon>
        <taxon>Alphaproteobacteria</taxon>
        <taxon>Hyphomicrobiales</taxon>
        <taxon>Rhizobiaceae</taxon>
        <taxon>Rhizobium/Agrobacterium group</taxon>
        <taxon>Rhizobium</taxon>
    </lineage>
</organism>
<reference key="1">
    <citation type="journal article" date="2006" name="Proc. Natl. Acad. Sci. U.S.A.">
        <title>The partitioned Rhizobium etli genome: genetic and metabolic redundancy in seven interacting replicons.</title>
        <authorList>
            <person name="Gonzalez V."/>
            <person name="Santamaria R.I."/>
            <person name="Bustos P."/>
            <person name="Hernandez-Gonzalez I."/>
            <person name="Medrano-Soto A."/>
            <person name="Moreno-Hagelsieb G."/>
            <person name="Janga S.C."/>
            <person name="Ramirez M.A."/>
            <person name="Jimenez-Jacinto V."/>
            <person name="Collado-Vides J."/>
            <person name="Davila G."/>
        </authorList>
    </citation>
    <scope>NUCLEOTIDE SEQUENCE [LARGE SCALE GENOMIC DNA]</scope>
    <source>
        <strain>ATCC 51251 / DSM 11541 / JCM 21823 / NBRC 15573 / CFN 42</strain>
    </source>
</reference>
<gene>
    <name evidence="1" type="primary">thyA</name>
    <name type="ordered locus">RHE_CH02799</name>
</gene>
<protein>
    <recommendedName>
        <fullName evidence="1">Thymidylate synthase</fullName>
        <shortName evidence="1">TS</shortName>
        <shortName evidence="1">TSase</shortName>
        <ecNumber evidence="1">2.1.1.45</ecNumber>
    </recommendedName>
</protein>
<proteinExistence type="inferred from homology"/>
<feature type="chain" id="PRO_1000000657" description="Thymidylate synthase">
    <location>
        <begin position="1"/>
        <end position="264"/>
    </location>
</feature>
<feature type="active site" description="Nucleophile" evidence="1">
    <location>
        <position position="146"/>
    </location>
</feature>
<feature type="binding site" description="in other chain" evidence="1">
    <location>
        <position position="21"/>
    </location>
    <ligand>
        <name>dUMP</name>
        <dbReference type="ChEBI" id="CHEBI:246422"/>
        <note>ligand shared between dimeric partners</note>
    </ligand>
</feature>
<feature type="binding site" evidence="1">
    <location>
        <position position="51"/>
    </location>
    <ligand>
        <name>(6R)-5,10-methylene-5,6,7,8-tetrahydrofolate</name>
        <dbReference type="ChEBI" id="CHEBI:15636"/>
    </ligand>
</feature>
<feature type="binding site" evidence="1">
    <location>
        <begin position="126"/>
        <end position="127"/>
    </location>
    <ligand>
        <name>dUMP</name>
        <dbReference type="ChEBI" id="CHEBI:246422"/>
        <note>ligand shared between dimeric partners</note>
    </ligand>
</feature>
<feature type="binding site" description="in other chain" evidence="1">
    <location>
        <begin position="166"/>
        <end position="169"/>
    </location>
    <ligand>
        <name>dUMP</name>
        <dbReference type="ChEBI" id="CHEBI:246422"/>
        <note>ligand shared between dimeric partners</note>
    </ligand>
</feature>
<feature type="binding site" evidence="1">
    <location>
        <position position="169"/>
    </location>
    <ligand>
        <name>(6R)-5,10-methylene-5,6,7,8-tetrahydrofolate</name>
        <dbReference type="ChEBI" id="CHEBI:15636"/>
    </ligand>
</feature>
<feature type="binding site" description="in other chain" evidence="1">
    <location>
        <position position="177"/>
    </location>
    <ligand>
        <name>dUMP</name>
        <dbReference type="ChEBI" id="CHEBI:246422"/>
        <note>ligand shared between dimeric partners</note>
    </ligand>
</feature>
<feature type="binding site" description="in other chain" evidence="1">
    <location>
        <begin position="207"/>
        <end position="209"/>
    </location>
    <ligand>
        <name>dUMP</name>
        <dbReference type="ChEBI" id="CHEBI:246422"/>
        <note>ligand shared between dimeric partners</note>
    </ligand>
</feature>
<feature type="binding site" evidence="1">
    <location>
        <position position="263"/>
    </location>
    <ligand>
        <name>(6R)-5,10-methylene-5,6,7,8-tetrahydrofolate</name>
        <dbReference type="ChEBI" id="CHEBI:15636"/>
    </ligand>
</feature>
<sequence>MQQYLDLLAHVMEKGSDRGDRTGTGTRSVFGYQMRFDLGEGFPVLTTKKLHLRSIVHELLWFLKGETNIRYLKENGVSIWDEWADENGDLGPVYGAQWRSWPAPDGGHIDQIANLVKGIVNNPNSRRHIVSAWNPAEVDQMALPPCHCLFQFYVADGKLSCQLYQRSADVFLGVPFNIASYALLTMMVAQVTGLKGGDFVHTLGDAHLYHNHFDQAKLQLTRRPKPLPFMRINPEVKDIFGFTFDDFELIGYEADASIKAPIAV</sequence>
<keyword id="KW-0963">Cytoplasm</keyword>
<keyword id="KW-0489">Methyltransferase</keyword>
<keyword id="KW-0545">Nucleotide biosynthesis</keyword>
<keyword id="KW-1185">Reference proteome</keyword>
<keyword id="KW-0808">Transferase</keyword>
<evidence type="ECO:0000255" key="1">
    <source>
        <dbReference type="HAMAP-Rule" id="MF_00008"/>
    </source>
</evidence>
<name>TYSY_RHIEC</name>
<dbReference type="EC" id="2.1.1.45" evidence="1"/>
<dbReference type="EMBL" id="CP000133">
    <property type="protein sequence ID" value="ABC91568.1"/>
    <property type="molecule type" value="Genomic_DNA"/>
</dbReference>
<dbReference type="RefSeq" id="WP_011426045.1">
    <property type="nucleotide sequence ID" value="NC_007761.1"/>
</dbReference>
<dbReference type="SMR" id="Q2K6G8"/>
<dbReference type="KEGG" id="ret:RHE_CH02799"/>
<dbReference type="eggNOG" id="COG0207">
    <property type="taxonomic scope" value="Bacteria"/>
</dbReference>
<dbReference type="HOGENOM" id="CLU_021669_0_0_5"/>
<dbReference type="OrthoDB" id="9774633at2"/>
<dbReference type="UniPathway" id="UPA00575"/>
<dbReference type="Proteomes" id="UP000001936">
    <property type="component" value="Chromosome"/>
</dbReference>
<dbReference type="GO" id="GO:0005829">
    <property type="term" value="C:cytosol"/>
    <property type="evidence" value="ECO:0007669"/>
    <property type="project" value="TreeGrafter"/>
</dbReference>
<dbReference type="GO" id="GO:0004799">
    <property type="term" value="F:thymidylate synthase activity"/>
    <property type="evidence" value="ECO:0007669"/>
    <property type="project" value="UniProtKB-UniRule"/>
</dbReference>
<dbReference type="GO" id="GO:0006231">
    <property type="term" value="P:dTMP biosynthetic process"/>
    <property type="evidence" value="ECO:0007669"/>
    <property type="project" value="UniProtKB-UniRule"/>
</dbReference>
<dbReference type="GO" id="GO:0006235">
    <property type="term" value="P:dTTP biosynthetic process"/>
    <property type="evidence" value="ECO:0007669"/>
    <property type="project" value="UniProtKB-UniRule"/>
</dbReference>
<dbReference type="GO" id="GO:0032259">
    <property type="term" value="P:methylation"/>
    <property type="evidence" value="ECO:0007669"/>
    <property type="project" value="UniProtKB-KW"/>
</dbReference>
<dbReference type="CDD" id="cd00351">
    <property type="entry name" value="TS_Pyrimidine_HMase"/>
    <property type="match status" value="1"/>
</dbReference>
<dbReference type="FunFam" id="3.30.572.10:FF:000001">
    <property type="entry name" value="Thymidylate synthase"/>
    <property type="match status" value="1"/>
</dbReference>
<dbReference type="Gene3D" id="3.30.572.10">
    <property type="entry name" value="Thymidylate synthase/dCMP hydroxymethylase domain"/>
    <property type="match status" value="1"/>
</dbReference>
<dbReference type="HAMAP" id="MF_00008">
    <property type="entry name" value="Thymidy_synth_bact"/>
    <property type="match status" value="1"/>
</dbReference>
<dbReference type="InterPro" id="IPR045097">
    <property type="entry name" value="Thymidate_synth/dCMP_Mease"/>
</dbReference>
<dbReference type="InterPro" id="IPR023451">
    <property type="entry name" value="Thymidate_synth/dCMP_Mease_dom"/>
</dbReference>
<dbReference type="InterPro" id="IPR036926">
    <property type="entry name" value="Thymidate_synth/dCMP_Mease_sf"/>
</dbReference>
<dbReference type="InterPro" id="IPR000398">
    <property type="entry name" value="Thymidylate_synthase"/>
</dbReference>
<dbReference type="InterPro" id="IPR020940">
    <property type="entry name" value="Thymidylate_synthase_AS"/>
</dbReference>
<dbReference type="NCBIfam" id="NF002497">
    <property type="entry name" value="PRK01827.1-3"/>
    <property type="match status" value="1"/>
</dbReference>
<dbReference type="NCBIfam" id="NF002499">
    <property type="entry name" value="PRK01827.1-5"/>
    <property type="match status" value="1"/>
</dbReference>
<dbReference type="NCBIfam" id="TIGR03284">
    <property type="entry name" value="thym_sym"/>
    <property type="match status" value="2"/>
</dbReference>
<dbReference type="PANTHER" id="PTHR11548:SF9">
    <property type="entry name" value="THYMIDYLATE SYNTHASE"/>
    <property type="match status" value="1"/>
</dbReference>
<dbReference type="PANTHER" id="PTHR11548">
    <property type="entry name" value="THYMIDYLATE SYNTHASE 1"/>
    <property type="match status" value="1"/>
</dbReference>
<dbReference type="Pfam" id="PF00303">
    <property type="entry name" value="Thymidylat_synt"/>
    <property type="match status" value="1"/>
</dbReference>
<dbReference type="PRINTS" id="PR00108">
    <property type="entry name" value="THYMDSNTHASE"/>
</dbReference>
<dbReference type="SUPFAM" id="SSF55831">
    <property type="entry name" value="Thymidylate synthase/dCMP hydroxymethylase"/>
    <property type="match status" value="1"/>
</dbReference>
<dbReference type="PROSITE" id="PS00091">
    <property type="entry name" value="THYMIDYLATE_SYNTHASE"/>
    <property type="match status" value="1"/>
</dbReference>
<comment type="function">
    <text evidence="1">Catalyzes the reductive methylation of 2'-deoxyuridine-5'-monophosphate (dUMP) to 2'-deoxythymidine-5'-monophosphate (dTMP) while utilizing 5,10-methylenetetrahydrofolate (mTHF) as the methyl donor and reductant in the reaction, yielding dihydrofolate (DHF) as a by-product. This enzymatic reaction provides an intracellular de novo source of dTMP, an essential precursor for DNA biosynthesis.</text>
</comment>
<comment type="catalytic activity">
    <reaction evidence="1">
        <text>dUMP + (6R)-5,10-methylene-5,6,7,8-tetrahydrofolate = 7,8-dihydrofolate + dTMP</text>
        <dbReference type="Rhea" id="RHEA:12104"/>
        <dbReference type="ChEBI" id="CHEBI:15636"/>
        <dbReference type="ChEBI" id="CHEBI:57451"/>
        <dbReference type="ChEBI" id="CHEBI:63528"/>
        <dbReference type="ChEBI" id="CHEBI:246422"/>
        <dbReference type="EC" id="2.1.1.45"/>
    </reaction>
</comment>
<comment type="pathway">
    <text evidence="1">Pyrimidine metabolism; dTTP biosynthesis.</text>
</comment>
<comment type="subunit">
    <text evidence="1">Homodimer.</text>
</comment>
<comment type="subcellular location">
    <subcellularLocation>
        <location evidence="1">Cytoplasm</location>
    </subcellularLocation>
</comment>
<comment type="similarity">
    <text evidence="1">Belongs to the thymidylate synthase family. Bacterial-type ThyA subfamily.</text>
</comment>